<protein>
    <recommendedName>
        <fullName evidence="1">Large ribosomal subunit protein eL38</fullName>
    </recommendedName>
    <alternativeName>
        <fullName>60S ribosomal protein L38</fullName>
    </alternativeName>
</protein>
<sequence length="71" mass="8302">MPKQLKEIKEFLLTARRKDAKSVKIKKNPDNVTKFKVRCSKYLYTIVVTEKEKAEKLKQSLPPGLQVKELK</sequence>
<evidence type="ECO:0000305" key="1"/>
<name>RL38_IXOSC</name>
<keyword id="KW-1185">Reference proteome</keyword>
<keyword id="KW-0687">Ribonucleoprotein</keyword>
<keyword id="KW-0689">Ribosomal protein</keyword>
<dbReference type="EMBL" id="DQ066196">
    <property type="protein sequence ID" value="AAY66833.1"/>
    <property type="molecule type" value="mRNA"/>
</dbReference>
<dbReference type="RefSeq" id="XP_002406841.1">
    <property type="nucleotide sequence ID" value="XM_002406797.1"/>
</dbReference>
<dbReference type="SMR" id="Q4PMD1"/>
<dbReference type="FunCoup" id="Q4PMD1">
    <property type="interactions" value="928"/>
</dbReference>
<dbReference type="EnsemblMetazoa" id="ISCI001867-RA">
    <property type="protein sequence ID" value="ISCI001867-PA"/>
    <property type="gene ID" value="ISCI001867"/>
</dbReference>
<dbReference type="EnsemblMetazoa" id="ISCW001867-RA">
    <property type="protein sequence ID" value="ISCW001867-PA"/>
    <property type="gene ID" value="ISCW001867"/>
</dbReference>
<dbReference type="VEuPathDB" id="VectorBase:ISCI001867"/>
<dbReference type="VEuPathDB" id="VectorBase:ISCW001867"/>
<dbReference type="HOGENOM" id="CLU_152057_2_0_1"/>
<dbReference type="InParanoid" id="Q4PMD1"/>
<dbReference type="PhylomeDB" id="Q4PMD1"/>
<dbReference type="Proteomes" id="UP000001555">
    <property type="component" value="Unassembled WGS sequence"/>
</dbReference>
<dbReference type="GO" id="GO:0022625">
    <property type="term" value="C:cytosolic large ribosomal subunit"/>
    <property type="evidence" value="ECO:0000318"/>
    <property type="project" value="GO_Central"/>
</dbReference>
<dbReference type="GO" id="GO:0003735">
    <property type="term" value="F:structural constituent of ribosome"/>
    <property type="evidence" value="ECO:0000318"/>
    <property type="project" value="GO_Central"/>
</dbReference>
<dbReference type="GO" id="GO:0022618">
    <property type="term" value="P:protein-RNA complex assembly"/>
    <property type="evidence" value="ECO:0000318"/>
    <property type="project" value="GO_Central"/>
</dbReference>
<dbReference type="GO" id="GO:0006412">
    <property type="term" value="P:translation"/>
    <property type="evidence" value="ECO:0007669"/>
    <property type="project" value="InterPro"/>
</dbReference>
<dbReference type="FunFam" id="3.30.720.90:FF:000001">
    <property type="entry name" value="60S ribosomal protein L38"/>
    <property type="match status" value="1"/>
</dbReference>
<dbReference type="Gene3D" id="3.30.720.90">
    <property type="match status" value="1"/>
</dbReference>
<dbReference type="InterPro" id="IPR002675">
    <property type="entry name" value="Ribosomal_eL38"/>
</dbReference>
<dbReference type="InterPro" id="IPR038464">
    <property type="entry name" value="Ribosomal_eL38_sf"/>
</dbReference>
<dbReference type="PANTHER" id="PTHR10965">
    <property type="entry name" value="60S RIBOSOMAL PROTEIN L38"/>
    <property type="match status" value="1"/>
</dbReference>
<dbReference type="PANTHER" id="PTHR10965:SF0">
    <property type="entry name" value="LARGE RIBOSOMAL SUBUNIT PROTEIN EL38"/>
    <property type="match status" value="1"/>
</dbReference>
<dbReference type="Pfam" id="PF01781">
    <property type="entry name" value="Ribosomal_L38e"/>
    <property type="match status" value="1"/>
</dbReference>
<organism>
    <name type="scientific">Ixodes scapularis</name>
    <name type="common">Black-legged tick</name>
    <name type="synonym">Deer tick</name>
    <dbReference type="NCBI Taxonomy" id="6945"/>
    <lineage>
        <taxon>Eukaryota</taxon>
        <taxon>Metazoa</taxon>
        <taxon>Ecdysozoa</taxon>
        <taxon>Arthropoda</taxon>
        <taxon>Chelicerata</taxon>
        <taxon>Arachnida</taxon>
        <taxon>Acari</taxon>
        <taxon>Parasitiformes</taxon>
        <taxon>Ixodida</taxon>
        <taxon>Ixodoidea</taxon>
        <taxon>Ixodidae</taxon>
        <taxon>Ixodinae</taxon>
        <taxon>Ixodes</taxon>
    </lineage>
</organism>
<accession>Q4PMD1</accession>
<reference key="1">
    <citation type="journal article" date="2006" name="Insect Biochem. Mol. Biol.">
        <title>An annotated catalog of salivary gland transcripts from Ixodes scapularis ticks.</title>
        <authorList>
            <person name="Ribeiro J.M.C."/>
            <person name="Alarcon-Chaidez F."/>
            <person name="Francischetti I.M.B."/>
            <person name="Mans B.J."/>
            <person name="Mather T.N."/>
            <person name="Valenzuela J.G."/>
            <person name="Wikel S.K."/>
        </authorList>
    </citation>
    <scope>NUCLEOTIDE SEQUENCE [LARGE SCALE MRNA]</scope>
    <source>
        <strain>ISUFL76</strain>
        <tissue>Salivary gland</tissue>
    </source>
</reference>
<feature type="chain" id="PRO_0000319559" description="Large ribosomal subunit protein eL38">
    <location>
        <begin position="1"/>
        <end position="71"/>
    </location>
</feature>
<gene>
    <name type="primary">RpL38</name>
</gene>
<proteinExistence type="inferred from homology"/>
<comment type="similarity">
    <text evidence="1">Belongs to the eukaryotic ribosomal protein eL38 family.</text>
</comment>